<sequence>MRKHAKKIIRIIKMKLKLVAVAVTSLLAAGVVNAAEVYNKDGNKLDLYGKVHAQHYFSDDNGSDGDKTYARLGFKGETQINDQLTGFGQWEYEFKGNRTESQGADKDKTRLAFAGLKFADYGSFDYGRNYGVAYDIGAWTDVLPEFGGDTWTQTDVFMTGRTTGVATYRNTDFFGLVEGLNFAAQYQGKNDRDGAYESNGDGFGLSATYEYEGFGVGAAYAKSDRTNNQVKAASNLNAAGKNAEVWAAGLKYDANNIYLATTYSETLNMTTFGEDAAGDAFIANKTQNFEAVAQYQFDFGLRPSIAYLKSKGKNLGTYGDQDLVEYIDVGATYYFNKNMSTFVDYKINLLDDSDFTKAAKVSTDNIVAVGLNYQF</sequence>
<dbReference type="EMBL" id="FQ312003">
    <property type="protein sequence ID" value="CBW17597.1"/>
    <property type="molecule type" value="Genomic_DNA"/>
</dbReference>
<dbReference type="SMR" id="A0A0H3NBQ0"/>
<dbReference type="KEGG" id="sey:SL1344_1503"/>
<dbReference type="PATRIC" id="fig|216597.6.peg.1670"/>
<dbReference type="HOGENOM" id="CLU_058202_0_0_6"/>
<dbReference type="Proteomes" id="UP000008962">
    <property type="component" value="Chromosome"/>
</dbReference>
<dbReference type="GO" id="GO:0009279">
    <property type="term" value="C:cell outer membrane"/>
    <property type="evidence" value="ECO:0007669"/>
    <property type="project" value="UniProtKB-SubCell"/>
</dbReference>
<dbReference type="GO" id="GO:0046930">
    <property type="term" value="C:pore complex"/>
    <property type="evidence" value="ECO:0007669"/>
    <property type="project" value="UniProtKB-KW"/>
</dbReference>
<dbReference type="GO" id="GO:0015288">
    <property type="term" value="F:porin activity"/>
    <property type="evidence" value="ECO:0007669"/>
    <property type="project" value="UniProtKB-KW"/>
</dbReference>
<dbReference type="GO" id="GO:0034220">
    <property type="term" value="P:monoatomic ion transmembrane transport"/>
    <property type="evidence" value="ECO:0007669"/>
    <property type="project" value="InterPro"/>
</dbReference>
<dbReference type="CDD" id="cd00342">
    <property type="entry name" value="gram_neg_porins"/>
    <property type="match status" value="1"/>
</dbReference>
<dbReference type="Gene3D" id="2.40.160.10">
    <property type="entry name" value="Porin"/>
    <property type="match status" value="1"/>
</dbReference>
<dbReference type="InterPro" id="IPR050298">
    <property type="entry name" value="Gram-neg_bact_OMP"/>
</dbReference>
<dbReference type="InterPro" id="IPR033900">
    <property type="entry name" value="Gram_neg_porin_domain"/>
</dbReference>
<dbReference type="InterPro" id="IPR023614">
    <property type="entry name" value="Porin_dom_sf"/>
</dbReference>
<dbReference type="InterPro" id="IPR001897">
    <property type="entry name" value="Porin_gammaproteobac"/>
</dbReference>
<dbReference type="InterPro" id="IPR001702">
    <property type="entry name" value="Porin_Gram-ve"/>
</dbReference>
<dbReference type="InterPro" id="IPR013793">
    <property type="entry name" value="Porin_Gram-ve_CS"/>
</dbReference>
<dbReference type="NCBIfam" id="NF007841">
    <property type="entry name" value="PRK10554.1"/>
    <property type="match status" value="1"/>
</dbReference>
<dbReference type="PANTHER" id="PTHR34501:SF2">
    <property type="entry name" value="OUTER MEMBRANE PORIN F-RELATED"/>
    <property type="match status" value="1"/>
</dbReference>
<dbReference type="PANTHER" id="PTHR34501">
    <property type="entry name" value="PROTEIN YDDL-RELATED"/>
    <property type="match status" value="1"/>
</dbReference>
<dbReference type="Pfam" id="PF00267">
    <property type="entry name" value="Porin_1"/>
    <property type="match status" value="1"/>
</dbReference>
<dbReference type="PRINTS" id="PR00183">
    <property type="entry name" value="ECOLIPORIN"/>
</dbReference>
<dbReference type="PRINTS" id="PR00182">
    <property type="entry name" value="ECOLNEIPORIN"/>
</dbReference>
<dbReference type="SUPFAM" id="SSF56935">
    <property type="entry name" value="Porins"/>
    <property type="match status" value="1"/>
</dbReference>
<dbReference type="PROSITE" id="PS00576">
    <property type="entry name" value="GRAM_NEG_PORIN"/>
    <property type="match status" value="1"/>
</dbReference>
<keyword id="KW-0998">Cell outer membrane</keyword>
<keyword id="KW-0406">Ion transport</keyword>
<keyword id="KW-0472">Membrane</keyword>
<keyword id="KW-0626">Porin</keyword>
<keyword id="KW-0732">Signal</keyword>
<keyword id="KW-0812">Transmembrane</keyword>
<keyword id="KW-1134">Transmembrane beta strand</keyword>
<keyword id="KW-0813">Transport</keyword>
<proteinExistence type="evidence at protein level"/>
<feature type="signal peptide" evidence="1">
    <location>
        <begin position="1"/>
        <end position="34"/>
    </location>
</feature>
<feature type="chain" id="PRO_5002616166" description="Outer membrane porin OmpD" evidence="1">
    <location>
        <begin position="35"/>
        <end position="375"/>
    </location>
</feature>
<gene>
    <name evidence="3" type="primary">ompD</name>
    <name type="ordered locus">SL1344_1503</name>
</gene>
<protein>
    <recommendedName>
        <fullName evidence="3">Outer membrane porin OmpD</fullName>
    </recommendedName>
</protein>
<comment type="function">
    <text evidence="4">Forms pores that allow passive diffusion of small molecules across the outer membrane.</text>
</comment>
<comment type="subunit">
    <text evidence="4">Homotrimer. Mixed heterotrimers with other porins are also probable.</text>
</comment>
<comment type="subcellular location">
    <subcellularLocation>
        <location evidence="2">Cell outer membrane</location>
        <topology evidence="4">Multi-pass membrane protein</topology>
    </subcellularLocation>
</comment>
<comment type="induction">
    <text evidence="2">Expressed in high osmolarity conditions (at protein level).</text>
</comment>
<comment type="disruption phenotype">
    <text evidence="2">Slight decrease in virulence in male BALB/c mice.</text>
</comment>
<comment type="similarity">
    <text evidence="4">Belongs to the Gram-negative porin family.</text>
</comment>
<organism>
    <name type="scientific">Salmonella typhimurium (strain SL1344)</name>
    <dbReference type="NCBI Taxonomy" id="216597"/>
    <lineage>
        <taxon>Bacteria</taxon>
        <taxon>Pseudomonadati</taxon>
        <taxon>Pseudomonadota</taxon>
        <taxon>Gammaproteobacteria</taxon>
        <taxon>Enterobacterales</taxon>
        <taxon>Enterobacteriaceae</taxon>
        <taxon>Salmonella</taxon>
    </lineage>
</organism>
<accession>A0A0H3NBQ0</accession>
<reference key="1">
    <citation type="journal article" date="2012" name="Proc. Natl. Acad. Sci. U.S.A.">
        <title>The transcriptional landscape and small RNAs of Salmonella enterica serovar Typhimurium.</title>
        <authorList>
            <person name="Kroger C."/>
            <person name="Dillon S.C."/>
            <person name="Cameron A.D."/>
            <person name="Papenfort K."/>
            <person name="Sivasankaran S.K."/>
            <person name="Hokamp K."/>
            <person name="Chao Y."/>
            <person name="Sittka A."/>
            <person name="Hebrard M."/>
            <person name="Handler K."/>
            <person name="Colgan A."/>
            <person name="Leekitcharoenphon P."/>
            <person name="Langridge G.C."/>
            <person name="Lohan A.J."/>
            <person name="Loftus B."/>
            <person name="Lucchini S."/>
            <person name="Ussery D.W."/>
            <person name="Dorman C.J."/>
            <person name="Thomson N.R."/>
            <person name="Vogel J."/>
            <person name="Hinton J.C."/>
        </authorList>
    </citation>
    <scope>NUCLEOTIDE SEQUENCE [LARGE SCALE GENOMIC DNA]</scope>
    <source>
        <strain>SL1344</strain>
    </source>
</reference>
<reference key="2">
    <citation type="journal article" date="1989" name="Infect. Immun.">
        <title>Characterization of porin and ompR mutants of a virulent strain of Salmonella typhimurium: ompR mutants are attenuated in vivo.</title>
        <authorList>
            <person name="Dorman C.J."/>
            <person name="Chatfield S."/>
            <person name="Higgins C.F."/>
            <person name="Hayward C."/>
            <person name="Dougan G."/>
        </authorList>
    </citation>
    <scope>SUBCELLULAR LOCATION</scope>
    <scope>DISRUPTION PHENOTYPE</scope>
    <source>
        <strain>SL1344</strain>
    </source>
</reference>
<name>OMPD_SALTS</name>
<evidence type="ECO:0000255" key="1"/>
<evidence type="ECO:0000269" key="2">
    <source>
    </source>
</evidence>
<evidence type="ECO:0000303" key="3">
    <source>
    </source>
</evidence>
<evidence type="ECO:0000305" key="4"/>